<sequence length="476" mass="53716">MDFEAVIGLEVHAELSTNTKIYCGCTTEFGGQPNTHVCPICLGLPGSLPQLNKRVVEYGIKAGLALNCSINKVCRMDRKNYFYPDCPKNYQITQDEVPICRDGYIEIELENGEKKKIGIERIHMEEDAGKLLHTNAGTLVDYNRAGVPLIEIVSRPDIRTPEEATKYLEKLKSILSSIEVSDCKMEQGSLRCDGNISVMPKGSEKFGVRSEIKNMNSFKALEKALSYEYDRHVEAVTKGEILEQETRRWDEANSVTVLMRSKEKANDYRYFPEGDLVTLNISDEWIEEVRKTIPELPHEKAERFVNEFGIPKYDAMVLTLTMDMAKFFEETALKSEDAKVASNWLMGDISRLMNEKTIEVKDLKFNPEQLAELIKLINAGTISNNIGKKVLDDMFKSGKNPKDIVEEKGLVQNNDEGAILEVVKNIIENNPQSIEDFKNGKKRALGFLVGLVMKETKGKANPQIVNKLVSEEANKM</sequence>
<keyword id="KW-0067">ATP-binding</keyword>
<keyword id="KW-0436">Ligase</keyword>
<keyword id="KW-0547">Nucleotide-binding</keyword>
<keyword id="KW-0648">Protein biosynthesis</keyword>
<dbReference type="EC" id="6.3.5.-" evidence="1"/>
<dbReference type="EMBL" id="CP000939">
    <property type="protein sequence ID" value="ACA43327.1"/>
    <property type="molecule type" value="Genomic_DNA"/>
</dbReference>
<dbReference type="RefSeq" id="WP_003400637.1">
    <property type="nucleotide sequence ID" value="NC_010516.1"/>
</dbReference>
<dbReference type="SMR" id="B1INF6"/>
<dbReference type="KEGG" id="cbb:CLD_1257"/>
<dbReference type="HOGENOM" id="CLU_019240_0_0_9"/>
<dbReference type="Proteomes" id="UP000008541">
    <property type="component" value="Chromosome"/>
</dbReference>
<dbReference type="GO" id="GO:0050566">
    <property type="term" value="F:asparaginyl-tRNA synthase (glutamine-hydrolyzing) activity"/>
    <property type="evidence" value="ECO:0007669"/>
    <property type="project" value="RHEA"/>
</dbReference>
<dbReference type="GO" id="GO:0005524">
    <property type="term" value="F:ATP binding"/>
    <property type="evidence" value="ECO:0007669"/>
    <property type="project" value="UniProtKB-KW"/>
</dbReference>
<dbReference type="GO" id="GO:0050567">
    <property type="term" value="F:glutaminyl-tRNA synthase (glutamine-hydrolyzing) activity"/>
    <property type="evidence" value="ECO:0007669"/>
    <property type="project" value="UniProtKB-UniRule"/>
</dbReference>
<dbReference type="GO" id="GO:0070681">
    <property type="term" value="P:glutaminyl-tRNAGln biosynthesis via transamidation"/>
    <property type="evidence" value="ECO:0007669"/>
    <property type="project" value="TreeGrafter"/>
</dbReference>
<dbReference type="GO" id="GO:0006412">
    <property type="term" value="P:translation"/>
    <property type="evidence" value="ECO:0007669"/>
    <property type="project" value="UniProtKB-UniRule"/>
</dbReference>
<dbReference type="FunFam" id="1.10.10.410:FF:000001">
    <property type="entry name" value="Aspartyl/glutamyl-tRNA(Asn/Gln) amidotransferase subunit B"/>
    <property type="match status" value="1"/>
</dbReference>
<dbReference type="FunFam" id="1.10.150.380:FF:000001">
    <property type="entry name" value="Aspartyl/glutamyl-tRNA(Asn/Gln) amidotransferase subunit B"/>
    <property type="match status" value="1"/>
</dbReference>
<dbReference type="Gene3D" id="1.10.10.410">
    <property type="match status" value="1"/>
</dbReference>
<dbReference type="Gene3D" id="1.10.150.380">
    <property type="entry name" value="GatB domain, N-terminal subdomain"/>
    <property type="match status" value="1"/>
</dbReference>
<dbReference type="HAMAP" id="MF_00121">
    <property type="entry name" value="GatB"/>
    <property type="match status" value="1"/>
</dbReference>
<dbReference type="InterPro" id="IPR017959">
    <property type="entry name" value="Asn/Gln-tRNA_amidoTrfase_suB/E"/>
</dbReference>
<dbReference type="InterPro" id="IPR006075">
    <property type="entry name" value="Asn/Gln-tRNA_Trfase_suB/E_cat"/>
</dbReference>
<dbReference type="InterPro" id="IPR018027">
    <property type="entry name" value="Asn/Gln_amidotransferase"/>
</dbReference>
<dbReference type="InterPro" id="IPR003789">
    <property type="entry name" value="Asn/Gln_tRNA_amidoTrase-B-like"/>
</dbReference>
<dbReference type="InterPro" id="IPR004413">
    <property type="entry name" value="GatB"/>
</dbReference>
<dbReference type="InterPro" id="IPR042114">
    <property type="entry name" value="GatB_C_1"/>
</dbReference>
<dbReference type="InterPro" id="IPR023168">
    <property type="entry name" value="GatB_Yqey_C_2"/>
</dbReference>
<dbReference type="InterPro" id="IPR017958">
    <property type="entry name" value="Gln-tRNA_amidoTrfase_suB_CS"/>
</dbReference>
<dbReference type="InterPro" id="IPR014746">
    <property type="entry name" value="Gln_synth/guanido_kin_cat_dom"/>
</dbReference>
<dbReference type="NCBIfam" id="TIGR00133">
    <property type="entry name" value="gatB"/>
    <property type="match status" value="1"/>
</dbReference>
<dbReference type="NCBIfam" id="NF004012">
    <property type="entry name" value="PRK05477.1-2"/>
    <property type="match status" value="1"/>
</dbReference>
<dbReference type="NCBIfam" id="NF004014">
    <property type="entry name" value="PRK05477.1-4"/>
    <property type="match status" value="1"/>
</dbReference>
<dbReference type="PANTHER" id="PTHR11659">
    <property type="entry name" value="GLUTAMYL-TRNA GLN AMIDOTRANSFERASE SUBUNIT B MITOCHONDRIAL AND PROKARYOTIC PET112-RELATED"/>
    <property type="match status" value="1"/>
</dbReference>
<dbReference type="PANTHER" id="PTHR11659:SF0">
    <property type="entry name" value="GLUTAMYL-TRNA(GLN) AMIDOTRANSFERASE SUBUNIT B, MITOCHONDRIAL"/>
    <property type="match status" value="1"/>
</dbReference>
<dbReference type="Pfam" id="PF02934">
    <property type="entry name" value="GatB_N"/>
    <property type="match status" value="1"/>
</dbReference>
<dbReference type="Pfam" id="PF02637">
    <property type="entry name" value="GatB_Yqey"/>
    <property type="match status" value="1"/>
</dbReference>
<dbReference type="SMART" id="SM00845">
    <property type="entry name" value="GatB_Yqey"/>
    <property type="match status" value="1"/>
</dbReference>
<dbReference type="SUPFAM" id="SSF89095">
    <property type="entry name" value="GatB/YqeY motif"/>
    <property type="match status" value="1"/>
</dbReference>
<dbReference type="SUPFAM" id="SSF55931">
    <property type="entry name" value="Glutamine synthetase/guanido kinase"/>
    <property type="match status" value="1"/>
</dbReference>
<dbReference type="PROSITE" id="PS01234">
    <property type="entry name" value="GATB"/>
    <property type="match status" value="1"/>
</dbReference>
<proteinExistence type="inferred from homology"/>
<reference key="1">
    <citation type="journal article" date="2007" name="PLoS ONE">
        <title>Analysis of the neurotoxin complex genes in Clostridium botulinum A1-A4 and B1 strains: BoNT/A3, /Ba4 and /B1 clusters are located within plasmids.</title>
        <authorList>
            <person name="Smith T.J."/>
            <person name="Hill K.K."/>
            <person name="Foley B.T."/>
            <person name="Detter J.C."/>
            <person name="Munk A.C."/>
            <person name="Bruce D.C."/>
            <person name="Doggett N.A."/>
            <person name="Smith L.A."/>
            <person name="Marks J.D."/>
            <person name="Xie G."/>
            <person name="Brettin T.S."/>
        </authorList>
    </citation>
    <scope>NUCLEOTIDE SEQUENCE [LARGE SCALE GENOMIC DNA]</scope>
    <source>
        <strain>Okra / Type B1</strain>
    </source>
</reference>
<accession>B1INF6</accession>
<comment type="function">
    <text evidence="1">Allows the formation of correctly charged Asn-tRNA(Asn) or Gln-tRNA(Gln) through the transamidation of misacylated Asp-tRNA(Asn) or Glu-tRNA(Gln) in organisms which lack either or both of asparaginyl-tRNA or glutaminyl-tRNA synthetases. The reaction takes place in the presence of glutamine and ATP through an activated phospho-Asp-tRNA(Asn) or phospho-Glu-tRNA(Gln).</text>
</comment>
<comment type="catalytic activity">
    <reaction evidence="1">
        <text>L-glutamyl-tRNA(Gln) + L-glutamine + ATP + H2O = L-glutaminyl-tRNA(Gln) + L-glutamate + ADP + phosphate + H(+)</text>
        <dbReference type="Rhea" id="RHEA:17521"/>
        <dbReference type="Rhea" id="RHEA-COMP:9681"/>
        <dbReference type="Rhea" id="RHEA-COMP:9684"/>
        <dbReference type="ChEBI" id="CHEBI:15377"/>
        <dbReference type="ChEBI" id="CHEBI:15378"/>
        <dbReference type="ChEBI" id="CHEBI:29985"/>
        <dbReference type="ChEBI" id="CHEBI:30616"/>
        <dbReference type="ChEBI" id="CHEBI:43474"/>
        <dbReference type="ChEBI" id="CHEBI:58359"/>
        <dbReference type="ChEBI" id="CHEBI:78520"/>
        <dbReference type="ChEBI" id="CHEBI:78521"/>
        <dbReference type="ChEBI" id="CHEBI:456216"/>
    </reaction>
</comment>
<comment type="catalytic activity">
    <reaction evidence="1">
        <text>L-aspartyl-tRNA(Asn) + L-glutamine + ATP + H2O = L-asparaginyl-tRNA(Asn) + L-glutamate + ADP + phosphate + 2 H(+)</text>
        <dbReference type="Rhea" id="RHEA:14513"/>
        <dbReference type="Rhea" id="RHEA-COMP:9674"/>
        <dbReference type="Rhea" id="RHEA-COMP:9677"/>
        <dbReference type="ChEBI" id="CHEBI:15377"/>
        <dbReference type="ChEBI" id="CHEBI:15378"/>
        <dbReference type="ChEBI" id="CHEBI:29985"/>
        <dbReference type="ChEBI" id="CHEBI:30616"/>
        <dbReference type="ChEBI" id="CHEBI:43474"/>
        <dbReference type="ChEBI" id="CHEBI:58359"/>
        <dbReference type="ChEBI" id="CHEBI:78515"/>
        <dbReference type="ChEBI" id="CHEBI:78516"/>
        <dbReference type="ChEBI" id="CHEBI:456216"/>
    </reaction>
</comment>
<comment type="subunit">
    <text evidence="1">Heterotrimer of A, B and C subunits.</text>
</comment>
<comment type="similarity">
    <text evidence="1">Belongs to the GatB/GatE family. GatB subfamily.</text>
</comment>
<name>GATB_CLOBK</name>
<organism>
    <name type="scientific">Clostridium botulinum (strain Okra / Type B1)</name>
    <dbReference type="NCBI Taxonomy" id="498213"/>
    <lineage>
        <taxon>Bacteria</taxon>
        <taxon>Bacillati</taxon>
        <taxon>Bacillota</taxon>
        <taxon>Clostridia</taxon>
        <taxon>Eubacteriales</taxon>
        <taxon>Clostridiaceae</taxon>
        <taxon>Clostridium</taxon>
    </lineage>
</organism>
<protein>
    <recommendedName>
        <fullName evidence="1">Aspartyl/glutamyl-tRNA(Asn/Gln) amidotransferase subunit B</fullName>
        <shortName evidence="1">Asp/Glu-ADT subunit B</shortName>
        <ecNumber evidence="1">6.3.5.-</ecNumber>
    </recommendedName>
</protein>
<gene>
    <name evidence="1" type="primary">gatB</name>
    <name type="ordered locus">CLD_1257</name>
</gene>
<evidence type="ECO:0000255" key="1">
    <source>
        <dbReference type="HAMAP-Rule" id="MF_00121"/>
    </source>
</evidence>
<feature type="chain" id="PRO_1000095204" description="Aspartyl/glutamyl-tRNA(Asn/Gln) amidotransferase subunit B">
    <location>
        <begin position="1"/>
        <end position="476"/>
    </location>
</feature>